<proteinExistence type="evidence at protein level"/>
<sequence>MDKSKQMNINNLSNIPEVIDPGITIPIYEEEYENNGESNSQLQQQPQKLGSYRSRAGKFSNTLSNLLPSISAKLHHSKKNSHGKNGAEFSSSNNSSQSTVASKTPRASPSRSKMMESSIDGVTMDRPGSLTPPQDMEKLVHFPDSSNNFLIPAPRGSSDSFNLPHQISRTRNNTMSSQITSISSIAPKPRTSSGIWSSNASANDPMQQHLLQQLQPTTSNNTTNSNTLNDYSTKTAYFDNMVSTSGSQMADNKMNTNNLAIPNSVWSNTRQRSQSNASSIYTDAPLYEQPARASISSHYTIPTQESPLIADEIDPQSINWVTMDPTVPSINQISNLLPTNTISISNVFPLQHQQPQLNNAINLTSTSLATLCSKYGEVISARTLRNLNMALVEFSSVESAVKALDSLQGKEVSMIGAPSKISFAKILPMHQQPPQFLLNSQGLPLGLENNNLQPQPLLQEQLFNGAVTFQQQGNVSIPVFNQQSQQSQHQNHSSGSAGFSNVLHGYNNNNSMHGNNNNSANEKEQCPFPLPPPNVNEKEDLLREIIELFEANSDEYQINSLIKKSLNHKGTSDTQNFGPLPEPLSGREFDPPKLRELRKSIDSNAFSDLEIEQLAIAMLDELPELSSDYLGNTIVQKLFEHSSDIIKDIMLRKTSKYLTSMGVHKNGTWACQKMITMAHTPRQIMQVTQGVKDYCTPLINDQFGNYVIQCVLKFGFPWNQFIFESIIANFWVIVQNRYGARAVRACLEAHDIVTPEQSIVLSAMIVTYAEYLSTNSNGALLVTWFLDTSVLPNRHSILAPRLTKRIVELCGHRLASLTILKVLNYRGDDNARKIILDSLFGNVNAHDSSPPKELTKLLCETNYGPTFVHKVLAMPLLEDDLRAHIIKQVRKVLTDSTQIQPSRRLLEEVGLASPSSTHNKTKQQQQQHHNSSISHMFATPDTSGQHMRGLSVSSVKSGGSKHTTMNTTTTNGSSASTLSPGQPLNANSNSSMGYFSYPGVFPVSGFSGNASNGYAMNNDDLSSQFDMLNFNNGTRLSLPQLSLTNHNNTTMELVNNVGSSQPHTNNNNNNNNTNYNDDNTVFETLTLHSAN</sequence>
<organism>
    <name type="scientific">Saccharomyces cerevisiae (strain ATCC 204508 / S288c)</name>
    <name type="common">Baker's yeast</name>
    <dbReference type="NCBI Taxonomy" id="559292"/>
    <lineage>
        <taxon>Eukaryota</taxon>
        <taxon>Fungi</taxon>
        <taxon>Dikarya</taxon>
        <taxon>Ascomycota</taxon>
        <taxon>Saccharomycotina</taxon>
        <taxon>Saccharomycetes</taxon>
        <taxon>Saccharomycetales</taxon>
        <taxon>Saccharomycetaceae</taxon>
        <taxon>Saccharomyces</taxon>
    </lineage>
</organism>
<name>JSN1_YEAST</name>
<keyword id="KW-0597">Phosphoprotein</keyword>
<keyword id="KW-1185">Reference proteome</keyword>
<keyword id="KW-0677">Repeat</keyword>
<keyword id="KW-0694">RNA-binding</keyword>
<evidence type="ECO:0000255" key="1">
    <source>
        <dbReference type="PROSITE-ProRule" id="PRU00176"/>
    </source>
</evidence>
<evidence type="ECO:0000255" key="2">
    <source>
        <dbReference type="PROSITE-ProRule" id="PRU00318"/>
    </source>
</evidence>
<evidence type="ECO:0000256" key="3">
    <source>
        <dbReference type="SAM" id="MobiDB-lite"/>
    </source>
</evidence>
<evidence type="ECO:0000269" key="4">
    <source>
    </source>
</evidence>
<evidence type="ECO:0007744" key="5">
    <source>
    </source>
</evidence>
<evidence type="ECO:0007744" key="6">
    <source>
    </source>
</evidence>
<reference key="1">
    <citation type="journal article" date="1995" name="Mol. Biol. Cell">
        <title>Microtubule stability in budding yeast: characterization and dosage suppression of a benomyl-dependent tubulin mutant.</title>
        <authorList>
            <person name="Machin N."/>
            <person name="Lee J.S."/>
            <person name="Barnes G."/>
        </authorList>
    </citation>
    <scope>NUCLEOTIDE SEQUENCE [GENOMIC DNA]</scope>
</reference>
<reference key="2">
    <citation type="journal article" date="1996" name="EMBO J.">
        <title>Complete nucleotide sequence of Saccharomyces cerevisiae chromosome X.</title>
        <authorList>
            <person name="Galibert F."/>
            <person name="Alexandraki D."/>
            <person name="Baur A."/>
            <person name="Boles E."/>
            <person name="Chalwatzis N."/>
            <person name="Chuat J.-C."/>
            <person name="Coster F."/>
            <person name="Cziepluch C."/>
            <person name="de Haan M."/>
            <person name="Domdey H."/>
            <person name="Durand P."/>
            <person name="Entian K.-D."/>
            <person name="Gatius M."/>
            <person name="Goffeau A."/>
            <person name="Grivell L.A."/>
            <person name="Hennemann A."/>
            <person name="Herbert C.J."/>
            <person name="Heumann K."/>
            <person name="Hilger F."/>
            <person name="Hollenberg C.P."/>
            <person name="Huang M.-E."/>
            <person name="Jacq C."/>
            <person name="Jauniaux J.-C."/>
            <person name="Katsoulou C."/>
            <person name="Kirchrath L."/>
            <person name="Kleine K."/>
            <person name="Kordes E."/>
            <person name="Koetter P."/>
            <person name="Liebl S."/>
            <person name="Louis E.J."/>
            <person name="Manus V."/>
            <person name="Mewes H.-W."/>
            <person name="Miosga T."/>
            <person name="Obermaier B."/>
            <person name="Perea J."/>
            <person name="Pohl T.M."/>
            <person name="Portetelle D."/>
            <person name="Pujol A."/>
            <person name="Purnelle B."/>
            <person name="Ramezani Rad M."/>
            <person name="Rasmussen S.W."/>
            <person name="Rose M."/>
            <person name="Rossau R."/>
            <person name="Schaaff-Gerstenschlaeger I."/>
            <person name="Smits P.H.M."/>
            <person name="Scarcez T."/>
            <person name="Soriano N."/>
            <person name="To Van D."/>
            <person name="Tzermia M."/>
            <person name="Van Broekhoven A."/>
            <person name="Vandenbol M."/>
            <person name="Wedler H."/>
            <person name="von Wettstein D."/>
            <person name="Wambutt R."/>
            <person name="Zagulski M."/>
            <person name="Zollner A."/>
            <person name="Karpfinger-Hartl L."/>
        </authorList>
    </citation>
    <scope>NUCLEOTIDE SEQUENCE [LARGE SCALE GENOMIC DNA]</scope>
    <source>
        <strain>ATCC 204508 / S288c</strain>
    </source>
</reference>
<reference key="3">
    <citation type="journal article" date="2014" name="G3 (Bethesda)">
        <title>The reference genome sequence of Saccharomyces cerevisiae: Then and now.</title>
        <authorList>
            <person name="Engel S.R."/>
            <person name="Dietrich F.S."/>
            <person name="Fisk D.G."/>
            <person name="Binkley G."/>
            <person name="Balakrishnan R."/>
            <person name="Costanzo M.C."/>
            <person name="Dwight S.S."/>
            <person name="Hitz B.C."/>
            <person name="Karra K."/>
            <person name="Nash R.S."/>
            <person name="Weng S."/>
            <person name="Wong E.D."/>
            <person name="Lloyd P."/>
            <person name="Skrzypek M.S."/>
            <person name="Miyasato S.R."/>
            <person name="Simison M."/>
            <person name="Cherry J.M."/>
        </authorList>
    </citation>
    <scope>GENOME REANNOTATION</scope>
    <source>
        <strain>ATCC 204508 / S288c</strain>
    </source>
</reference>
<reference key="4">
    <citation type="journal article" date="1996" name="Yeast">
        <title>Analysis of a 62 kb DNA sequence of chromosome X reveals 36 open reading frames and a gene cluster with a counterpart on chromosome XI.</title>
        <authorList>
            <person name="Huang M.-E."/>
            <person name="Manus V."/>
            <person name="Chuat J.-C."/>
            <person name="Galibert F."/>
        </authorList>
    </citation>
    <scope>NUCLEOTIDE SEQUENCE [GENOMIC DNA] OF 204-1091</scope>
    <source>
        <strain>ATCC 204508 / S288c</strain>
    </source>
</reference>
<reference key="5">
    <citation type="journal article" date="2003" name="Nature">
        <title>Global analysis of protein expression in yeast.</title>
        <authorList>
            <person name="Ghaemmaghami S."/>
            <person name="Huh W.-K."/>
            <person name="Bower K."/>
            <person name="Howson R.W."/>
            <person name="Belle A."/>
            <person name="Dephoure N."/>
            <person name="O'Shea E.K."/>
            <person name="Weissman J.S."/>
        </authorList>
    </citation>
    <scope>LEVEL OF PROTEIN EXPRESSION [LARGE SCALE ANALYSIS]</scope>
</reference>
<reference key="6">
    <citation type="journal article" date="2007" name="J. Proteome Res.">
        <title>Large-scale phosphorylation analysis of alpha-factor-arrested Saccharomyces cerevisiae.</title>
        <authorList>
            <person name="Li X."/>
            <person name="Gerber S.A."/>
            <person name="Rudner A.D."/>
            <person name="Beausoleil S.A."/>
            <person name="Haas W."/>
            <person name="Villen J."/>
            <person name="Elias J.E."/>
            <person name="Gygi S.P."/>
        </authorList>
    </citation>
    <scope>IDENTIFICATION BY MASS SPECTROMETRY [LARGE SCALE ANALYSIS]</scope>
    <source>
        <strain>ADR376</strain>
    </source>
</reference>
<reference key="7">
    <citation type="journal article" date="2008" name="Mol. Cell. Proteomics">
        <title>A multidimensional chromatography technology for in-depth phosphoproteome analysis.</title>
        <authorList>
            <person name="Albuquerque C.P."/>
            <person name="Smolka M.B."/>
            <person name="Payne S.H."/>
            <person name="Bafna V."/>
            <person name="Eng J."/>
            <person name="Zhou H."/>
        </authorList>
    </citation>
    <scope>PHOSPHORYLATION [LARGE SCALE ANALYSIS] AT THR-131</scope>
    <scope>IDENTIFICATION BY MASS SPECTROMETRY [LARGE SCALE ANALYSIS]</scope>
</reference>
<reference key="8">
    <citation type="journal article" date="2009" name="Science">
        <title>Global analysis of Cdk1 substrate phosphorylation sites provides insights into evolution.</title>
        <authorList>
            <person name="Holt L.J."/>
            <person name="Tuch B.B."/>
            <person name="Villen J."/>
            <person name="Johnson A.D."/>
            <person name="Gygi S.P."/>
            <person name="Morgan D.O."/>
        </authorList>
    </citation>
    <scope>PHOSPHORYLATION [LARGE SCALE ANALYSIS] AT SER-129; THR-131; SER-160; SER-168 AND SER-913</scope>
    <scope>IDENTIFICATION BY MASS SPECTROMETRY [LARGE SCALE ANALYSIS]</scope>
</reference>
<comment type="miscellaneous">
    <text evidence="4">Present with 784 molecules/cell in log phase SD medium.</text>
</comment>
<gene>
    <name type="primary">JSN1</name>
    <name type="synonym">PUF1</name>
    <name type="ordered locus">YJR091C</name>
    <name type="ORF">J1890</name>
</gene>
<accession>P47135</accession>
<accession>D6VWQ9</accession>
<protein>
    <recommendedName>
        <fullName>Protein JSN1</fullName>
    </recommendedName>
    <alternativeName>
        <fullName>Pumilio homology domain family member 1</fullName>
    </alternativeName>
</protein>
<dbReference type="EMBL" id="L43493">
    <property type="protein sequence ID" value="AAC41666.1"/>
    <property type="molecule type" value="Genomic_DNA"/>
</dbReference>
<dbReference type="EMBL" id="Z49591">
    <property type="protein sequence ID" value="CAA89618.1"/>
    <property type="molecule type" value="Genomic_DNA"/>
</dbReference>
<dbReference type="EMBL" id="L47993">
    <property type="protein sequence ID" value="AAB39314.1"/>
    <property type="molecule type" value="Genomic_DNA"/>
</dbReference>
<dbReference type="EMBL" id="BK006943">
    <property type="protein sequence ID" value="DAA08875.1"/>
    <property type="molecule type" value="Genomic_DNA"/>
</dbReference>
<dbReference type="PIR" id="S57112">
    <property type="entry name" value="S57112"/>
</dbReference>
<dbReference type="RefSeq" id="NP_012624.1">
    <property type="nucleotide sequence ID" value="NM_001181748.1"/>
</dbReference>
<dbReference type="SMR" id="P47135"/>
<dbReference type="BioGRID" id="33845">
    <property type="interactions" value="154"/>
</dbReference>
<dbReference type="DIP" id="DIP-1281N"/>
<dbReference type="FunCoup" id="P47135">
    <property type="interactions" value="97"/>
</dbReference>
<dbReference type="IntAct" id="P47135">
    <property type="interactions" value="24"/>
</dbReference>
<dbReference type="MINT" id="P47135"/>
<dbReference type="STRING" id="4932.YJR091C"/>
<dbReference type="MoonDB" id="P47135">
    <property type="type" value="Predicted"/>
</dbReference>
<dbReference type="GlyGen" id="P47135">
    <property type="glycosylation" value="1 site, 1 O-linked glycan (1 site)"/>
</dbReference>
<dbReference type="iPTMnet" id="P47135"/>
<dbReference type="PaxDb" id="4932-YJR091C"/>
<dbReference type="PeptideAtlas" id="P47135"/>
<dbReference type="EnsemblFungi" id="YJR091C_mRNA">
    <property type="protein sequence ID" value="YJR091C"/>
    <property type="gene ID" value="YJR091C"/>
</dbReference>
<dbReference type="GeneID" id="853553"/>
<dbReference type="KEGG" id="sce:YJR091C"/>
<dbReference type="AGR" id="SGD:S000003851"/>
<dbReference type="SGD" id="S000003851">
    <property type="gene designation" value="JSN1"/>
</dbReference>
<dbReference type="VEuPathDB" id="FungiDB:YJR091C"/>
<dbReference type="eggNOG" id="KOG4574">
    <property type="taxonomic scope" value="Eukaryota"/>
</dbReference>
<dbReference type="GeneTree" id="ENSGT00940000176457"/>
<dbReference type="HOGENOM" id="CLU_009728_0_0_1"/>
<dbReference type="InParanoid" id="P47135"/>
<dbReference type="OMA" id="TWACQKI"/>
<dbReference type="OrthoDB" id="2017782at2759"/>
<dbReference type="BioCyc" id="YEAST:G3O-31718-MONOMER"/>
<dbReference type="BioGRID-ORCS" id="853553">
    <property type="hits" value="0 hits in 10 CRISPR screens"/>
</dbReference>
<dbReference type="PRO" id="PR:P47135"/>
<dbReference type="Proteomes" id="UP000002311">
    <property type="component" value="Chromosome X"/>
</dbReference>
<dbReference type="RNAct" id="P47135">
    <property type="molecule type" value="protein"/>
</dbReference>
<dbReference type="GO" id="GO:0005737">
    <property type="term" value="C:cytoplasm"/>
    <property type="evidence" value="ECO:0000314"/>
    <property type="project" value="SGD"/>
</dbReference>
<dbReference type="GO" id="GO:0032473">
    <property type="term" value="C:cytoplasmic side of mitochondrial outer membrane"/>
    <property type="evidence" value="ECO:0000314"/>
    <property type="project" value="SGD"/>
</dbReference>
<dbReference type="GO" id="GO:0009277">
    <property type="term" value="C:fungal-type cell wall"/>
    <property type="evidence" value="ECO:0000314"/>
    <property type="project" value="SGD"/>
</dbReference>
<dbReference type="GO" id="GO:0000932">
    <property type="term" value="C:P-body"/>
    <property type="evidence" value="ECO:0000318"/>
    <property type="project" value="GO_Central"/>
</dbReference>
<dbReference type="GO" id="GO:0035925">
    <property type="term" value="F:mRNA 3'-UTR AU-rich region binding"/>
    <property type="evidence" value="ECO:0000318"/>
    <property type="project" value="GO_Central"/>
</dbReference>
<dbReference type="GO" id="GO:0003729">
    <property type="term" value="F:mRNA binding"/>
    <property type="evidence" value="ECO:0000314"/>
    <property type="project" value="SGD"/>
</dbReference>
<dbReference type="GO" id="GO:0051654">
    <property type="term" value="P:establishment of mitochondrion localization"/>
    <property type="evidence" value="ECO:0000315"/>
    <property type="project" value="SGD"/>
</dbReference>
<dbReference type="GO" id="GO:0000288">
    <property type="term" value="P:nuclear-transcribed mRNA catabolic process, deadenylation-dependent decay"/>
    <property type="evidence" value="ECO:0000316"/>
    <property type="project" value="SGD"/>
</dbReference>
<dbReference type="GO" id="GO:0031503">
    <property type="term" value="P:protein-containing complex localization"/>
    <property type="evidence" value="ECO:0000315"/>
    <property type="project" value="SGD"/>
</dbReference>
<dbReference type="CDD" id="cd21616">
    <property type="entry name" value="RRM_ScJSN1_like"/>
    <property type="match status" value="1"/>
</dbReference>
<dbReference type="FunFam" id="3.30.70.330:FF:000617">
    <property type="entry name" value="Puf family protein"/>
    <property type="match status" value="1"/>
</dbReference>
<dbReference type="FunFam" id="1.25.10.10:FF:000167">
    <property type="entry name" value="RNA binding protein Jsn1"/>
    <property type="match status" value="1"/>
</dbReference>
<dbReference type="Gene3D" id="3.30.70.330">
    <property type="match status" value="1"/>
</dbReference>
<dbReference type="Gene3D" id="1.25.10.10">
    <property type="entry name" value="Leucine-rich Repeat Variant"/>
    <property type="match status" value="1"/>
</dbReference>
<dbReference type="InterPro" id="IPR011989">
    <property type="entry name" value="ARM-like"/>
</dbReference>
<dbReference type="InterPro" id="IPR016024">
    <property type="entry name" value="ARM-type_fold"/>
</dbReference>
<dbReference type="InterPro" id="IPR012677">
    <property type="entry name" value="Nucleotide-bd_a/b_plait_sf"/>
</dbReference>
<dbReference type="InterPro" id="IPR033133">
    <property type="entry name" value="PUM-HD"/>
</dbReference>
<dbReference type="InterPro" id="IPR052645">
    <property type="entry name" value="Pumilio_domain_protein"/>
</dbReference>
<dbReference type="InterPro" id="IPR001313">
    <property type="entry name" value="Pumilio_RNA-bd_rpt"/>
</dbReference>
<dbReference type="InterPro" id="IPR035979">
    <property type="entry name" value="RBD_domain_sf"/>
</dbReference>
<dbReference type="InterPro" id="IPR000504">
    <property type="entry name" value="RRM_dom"/>
</dbReference>
<dbReference type="PANTHER" id="PTHR47093">
    <property type="entry name" value="PROTEIN JSN1-RELATED"/>
    <property type="match status" value="1"/>
</dbReference>
<dbReference type="PANTHER" id="PTHR47093:SF1">
    <property type="entry name" value="PROTEIN JSN1-RELATED"/>
    <property type="match status" value="1"/>
</dbReference>
<dbReference type="Pfam" id="PF00806">
    <property type="entry name" value="PUF"/>
    <property type="match status" value="2"/>
</dbReference>
<dbReference type="Pfam" id="PF00076">
    <property type="entry name" value="RRM_1"/>
    <property type="match status" value="1"/>
</dbReference>
<dbReference type="SMART" id="SM00025">
    <property type="entry name" value="Pumilio"/>
    <property type="match status" value="6"/>
</dbReference>
<dbReference type="SMART" id="SM00360">
    <property type="entry name" value="RRM"/>
    <property type="match status" value="1"/>
</dbReference>
<dbReference type="SUPFAM" id="SSF48371">
    <property type="entry name" value="ARM repeat"/>
    <property type="match status" value="1"/>
</dbReference>
<dbReference type="SUPFAM" id="SSF54928">
    <property type="entry name" value="RNA-binding domain, RBD"/>
    <property type="match status" value="1"/>
</dbReference>
<dbReference type="PROSITE" id="PS50302">
    <property type="entry name" value="PUM"/>
    <property type="match status" value="5"/>
</dbReference>
<dbReference type="PROSITE" id="PS50303">
    <property type="entry name" value="PUM_HD"/>
    <property type="match status" value="1"/>
</dbReference>
<dbReference type="PROSITE" id="PS50102">
    <property type="entry name" value="RRM"/>
    <property type="match status" value="1"/>
</dbReference>
<feature type="chain" id="PRO_0000075922" description="Protein JSN1">
    <location>
        <begin position="1"/>
        <end position="1091"/>
    </location>
</feature>
<feature type="domain" description="RRM" evidence="1">
    <location>
        <begin position="340"/>
        <end position="426"/>
    </location>
</feature>
<feature type="domain" description="PUM-HD" evidence="2">
    <location>
        <begin position="557"/>
        <end position="913"/>
    </location>
</feature>
<feature type="repeat" description="Pumilio 1">
    <location>
        <begin position="617"/>
        <end position="652"/>
    </location>
</feature>
<feature type="repeat" description="Pumilio 2">
    <location>
        <begin position="653"/>
        <end position="689"/>
    </location>
</feature>
<feature type="repeat" description="Pumilio 3">
    <location>
        <begin position="690"/>
        <end position="724"/>
    </location>
</feature>
<feature type="repeat" description="Pumilio 4">
    <location>
        <begin position="725"/>
        <end position="760"/>
    </location>
</feature>
<feature type="repeat" description="Pumilio 5">
    <location>
        <begin position="801"/>
        <end position="837"/>
    </location>
</feature>
<feature type="region of interest" description="Disordered" evidence="3">
    <location>
        <begin position="31"/>
        <end position="51"/>
    </location>
</feature>
<feature type="region of interest" description="Disordered" evidence="3">
    <location>
        <begin position="75"/>
        <end position="131"/>
    </location>
</feature>
<feature type="region of interest" description="Disordered" evidence="3">
    <location>
        <begin position="482"/>
        <end position="534"/>
    </location>
</feature>
<feature type="region of interest" description="Disordered" evidence="3">
    <location>
        <begin position="568"/>
        <end position="591"/>
    </location>
</feature>
<feature type="region of interest" description="Disordered" evidence="3">
    <location>
        <begin position="911"/>
        <end position="981"/>
    </location>
</feature>
<feature type="compositionally biased region" description="Polar residues" evidence="3">
    <location>
        <begin position="99"/>
        <end position="111"/>
    </location>
</feature>
<feature type="compositionally biased region" description="Low complexity" evidence="3">
    <location>
        <begin position="482"/>
        <end position="494"/>
    </location>
</feature>
<feature type="compositionally biased region" description="Low complexity" evidence="3">
    <location>
        <begin position="507"/>
        <end position="520"/>
    </location>
</feature>
<feature type="compositionally biased region" description="Polar residues" evidence="3">
    <location>
        <begin position="568"/>
        <end position="577"/>
    </location>
</feature>
<feature type="compositionally biased region" description="Low complexity" evidence="3">
    <location>
        <begin position="915"/>
        <end position="935"/>
    </location>
</feature>
<feature type="compositionally biased region" description="Low complexity" evidence="3">
    <location>
        <begin position="951"/>
        <end position="979"/>
    </location>
</feature>
<feature type="modified residue" description="Phosphoserine" evidence="6">
    <location>
        <position position="129"/>
    </location>
</feature>
<feature type="modified residue" description="Phosphothreonine" evidence="5 6">
    <location>
        <position position="131"/>
    </location>
</feature>
<feature type="modified residue" description="Phosphoserine" evidence="6">
    <location>
        <position position="160"/>
    </location>
</feature>
<feature type="modified residue" description="Phosphoserine" evidence="6">
    <location>
        <position position="168"/>
    </location>
</feature>
<feature type="modified residue" description="Phosphoserine" evidence="6">
    <location>
        <position position="913"/>
    </location>
</feature>